<organism>
    <name type="scientific">Cryptococcus neoformans var. neoformans serotype D (strain JEC21 / ATCC MYA-565)</name>
    <name type="common">Filobasidiella neoformans</name>
    <dbReference type="NCBI Taxonomy" id="214684"/>
    <lineage>
        <taxon>Eukaryota</taxon>
        <taxon>Fungi</taxon>
        <taxon>Dikarya</taxon>
        <taxon>Basidiomycota</taxon>
        <taxon>Agaricomycotina</taxon>
        <taxon>Tremellomycetes</taxon>
        <taxon>Tremellales</taxon>
        <taxon>Cryptococcaceae</taxon>
        <taxon>Cryptococcus</taxon>
        <taxon>Cryptococcus neoformans species complex</taxon>
    </lineage>
</organism>
<name>TIM9_CRYNJ</name>
<reference key="1">
    <citation type="journal article" date="2005" name="Science">
        <title>The genome of the basidiomycetous yeast and human pathogen Cryptococcus neoformans.</title>
        <authorList>
            <person name="Loftus B.J."/>
            <person name="Fung E."/>
            <person name="Roncaglia P."/>
            <person name="Rowley D."/>
            <person name="Amedeo P."/>
            <person name="Bruno D."/>
            <person name="Vamathevan J."/>
            <person name="Miranda M."/>
            <person name="Anderson I.J."/>
            <person name="Fraser J.A."/>
            <person name="Allen J.E."/>
            <person name="Bosdet I.E."/>
            <person name="Brent M.R."/>
            <person name="Chiu R."/>
            <person name="Doering T.L."/>
            <person name="Donlin M.J."/>
            <person name="D'Souza C.A."/>
            <person name="Fox D.S."/>
            <person name="Grinberg V."/>
            <person name="Fu J."/>
            <person name="Fukushima M."/>
            <person name="Haas B.J."/>
            <person name="Huang J.C."/>
            <person name="Janbon G."/>
            <person name="Jones S.J.M."/>
            <person name="Koo H.L."/>
            <person name="Krzywinski M.I."/>
            <person name="Kwon-Chung K.J."/>
            <person name="Lengeler K.B."/>
            <person name="Maiti R."/>
            <person name="Marra M.A."/>
            <person name="Marra R.E."/>
            <person name="Mathewson C.A."/>
            <person name="Mitchell T.G."/>
            <person name="Pertea M."/>
            <person name="Riggs F.R."/>
            <person name="Salzberg S.L."/>
            <person name="Schein J.E."/>
            <person name="Shvartsbeyn A."/>
            <person name="Shin H."/>
            <person name="Shumway M."/>
            <person name="Specht C.A."/>
            <person name="Suh B.B."/>
            <person name="Tenney A."/>
            <person name="Utterback T.R."/>
            <person name="Wickes B.L."/>
            <person name="Wortman J.R."/>
            <person name="Wye N.H."/>
            <person name="Kronstad J.W."/>
            <person name="Lodge J.K."/>
            <person name="Heitman J."/>
            <person name="Davis R.W."/>
            <person name="Fraser C.M."/>
            <person name="Hyman R.W."/>
        </authorList>
    </citation>
    <scope>NUCLEOTIDE SEQUENCE [LARGE SCALE GENOMIC DNA]</scope>
    <source>
        <strain>JEC21 / ATCC MYA-565</strain>
    </source>
</reference>
<protein>
    <recommendedName>
        <fullName>Mitochondrial import inner membrane translocase subunit TIM9</fullName>
    </recommendedName>
</protein>
<sequence>MDFSQFNGAEQAHMSKVIEKKQMQDFMRLYSGLVEKCFNACAQDFTSKALTTNETTCVQNCTDKFLKHSERVGARFAEHNAEQMQGAGQ</sequence>
<accession>P0CR96</accession>
<accession>Q561F8</accession>
<accession>Q5KQ89</accession>
<comment type="function">
    <text evidence="1">Mitochondrial intermembrane chaperone that participates in the import and insertion of multi-pass transmembrane proteins into the mitochondrial inner membrane. Also required for the transfer of beta-barrel precursors from the TOM complex to the sorting and assembly machinery (SAM complex) of the outer membrane. Acts as a chaperone-like protein that protects the hydrophobic precursors from aggregation and guide them through the mitochondrial intermembrane space (By similarity).</text>
</comment>
<comment type="subunit">
    <text evidence="1">Heterohexamer; composed of 3 copies of TIM9 and 3 copies of TIM10, named soluble 70 kDa complex. Associates with the TIM22 complex, whose core is composed of TIM22 and TIM54. Interacts with the transmembrane regions of multi-pass transmembrane proteins in transit (By similarity).</text>
</comment>
<comment type="subcellular location">
    <subcellularLocation>
        <location evidence="1">Mitochondrion inner membrane</location>
        <topology evidence="1">Peripheral membrane protein</topology>
        <orientation evidence="1">Intermembrane side</orientation>
    </subcellularLocation>
</comment>
<comment type="domain">
    <text evidence="1">The twin CX3C motif contains 4 conserved Cys residues that form 2 disulfide bonds in the mitochondrial intermembrane space. However, during the transit of TIM9 from cytoplasm into mitochondrion, the Cys residues probably coordinate zinc, thereby preventing folding and allowing its transfer across mitochondrial outer membrane (By similarity).</text>
</comment>
<comment type="similarity">
    <text evidence="2">Belongs to the small Tim family.</text>
</comment>
<gene>
    <name type="primary">TIM9</name>
    <name type="ordered locus">CNA00120</name>
</gene>
<proteinExistence type="inferred from homology"/>
<keyword id="KW-0143">Chaperone</keyword>
<keyword id="KW-1015">Disulfide bond</keyword>
<keyword id="KW-0472">Membrane</keyword>
<keyword id="KW-0479">Metal-binding</keyword>
<keyword id="KW-0496">Mitochondrion</keyword>
<keyword id="KW-0999">Mitochondrion inner membrane</keyword>
<keyword id="KW-0653">Protein transport</keyword>
<keyword id="KW-1185">Reference proteome</keyword>
<keyword id="KW-0811">Translocation</keyword>
<keyword id="KW-0813">Transport</keyword>
<keyword id="KW-0862">Zinc</keyword>
<evidence type="ECO:0000250" key="1"/>
<evidence type="ECO:0000305" key="2"/>
<dbReference type="EMBL" id="AE017341">
    <property type="protein sequence ID" value="AAW41258.2"/>
    <property type="molecule type" value="Genomic_DNA"/>
</dbReference>
<dbReference type="RefSeq" id="XP_567077.1">
    <property type="nucleotide sequence ID" value="XM_567077.1"/>
</dbReference>
<dbReference type="SMR" id="P0CR96"/>
<dbReference type="FunCoup" id="P0CR96">
    <property type="interactions" value="411"/>
</dbReference>
<dbReference type="STRING" id="214684.P0CR96"/>
<dbReference type="PaxDb" id="214684-P0CR96"/>
<dbReference type="EnsemblFungi" id="AAW41258">
    <property type="protein sequence ID" value="AAW41258"/>
    <property type="gene ID" value="CNA00120"/>
</dbReference>
<dbReference type="VEuPathDB" id="FungiDB:CNA00120"/>
<dbReference type="eggNOG" id="KOG3479">
    <property type="taxonomic scope" value="Eukaryota"/>
</dbReference>
<dbReference type="InParanoid" id="P0CR96"/>
<dbReference type="OrthoDB" id="1551503at2759"/>
<dbReference type="Proteomes" id="UP000002149">
    <property type="component" value="Chromosome 1"/>
</dbReference>
<dbReference type="GO" id="GO:0042719">
    <property type="term" value="C:mitochondrial intermembrane space protein transporter complex"/>
    <property type="evidence" value="ECO:0007669"/>
    <property type="project" value="EnsemblFungi"/>
</dbReference>
<dbReference type="GO" id="GO:0042721">
    <property type="term" value="C:TIM22 mitochondrial import inner membrane insertion complex"/>
    <property type="evidence" value="ECO:0007669"/>
    <property type="project" value="EnsemblFungi"/>
</dbReference>
<dbReference type="GO" id="GO:0046872">
    <property type="term" value="F:metal ion binding"/>
    <property type="evidence" value="ECO:0007669"/>
    <property type="project" value="UniProtKB-KW"/>
</dbReference>
<dbReference type="GO" id="GO:0140318">
    <property type="term" value="F:protein transporter activity"/>
    <property type="evidence" value="ECO:0007669"/>
    <property type="project" value="EnsemblFungi"/>
</dbReference>
<dbReference type="GO" id="GO:0051082">
    <property type="term" value="F:unfolded protein binding"/>
    <property type="evidence" value="ECO:0007669"/>
    <property type="project" value="EnsemblFungi"/>
</dbReference>
<dbReference type="GO" id="GO:0045039">
    <property type="term" value="P:protein insertion into mitochondrial inner membrane"/>
    <property type="evidence" value="ECO:0007669"/>
    <property type="project" value="EnsemblFungi"/>
</dbReference>
<dbReference type="Gene3D" id="1.10.287.810">
    <property type="entry name" value="Mitochondrial import inner membrane translocase subunit tim13 like domains"/>
    <property type="match status" value="1"/>
</dbReference>
<dbReference type="InterPro" id="IPR050673">
    <property type="entry name" value="Mito_inner_translocase_sub"/>
</dbReference>
<dbReference type="InterPro" id="IPR004217">
    <property type="entry name" value="Tim10-like"/>
</dbReference>
<dbReference type="InterPro" id="IPR035427">
    <property type="entry name" value="Tim10-like_dom_sf"/>
</dbReference>
<dbReference type="PANTHER" id="PTHR13172">
    <property type="entry name" value="MITOCHONDRIAL IMPORT INNER MEMBRANE TRANSLOCASE SUBUNIT TIM9B"/>
    <property type="match status" value="1"/>
</dbReference>
<dbReference type="Pfam" id="PF02953">
    <property type="entry name" value="zf-Tim10_DDP"/>
    <property type="match status" value="1"/>
</dbReference>
<dbReference type="SUPFAM" id="SSF144122">
    <property type="entry name" value="Tim10-like"/>
    <property type="match status" value="1"/>
</dbReference>
<feature type="chain" id="PRO_0000228043" description="Mitochondrial import inner membrane translocase subunit TIM9">
    <location>
        <begin position="1"/>
        <end position="89"/>
    </location>
</feature>
<feature type="short sequence motif" description="Twin CX3C motif">
    <location>
        <begin position="37"/>
        <end position="61"/>
    </location>
</feature>
<feature type="disulfide bond" evidence="1">
    <location>
        <begin position="37"/>
        <end position="61"/>
    </location>
</feature>
<feature type="disulfide bond" evidence="1">
    <location>
        <begin position="41"/>
        <end position="57"/>
    </location>
</feature>